<evidence type="ECO:0000250" key="1"/>
<evidence type="ECO:0000256" key="2">
    <source>
        <dbReference type="SAM" id="MobiDB-lite"/>
    </source>
</evidence>
<evidence type="ECO:0000305" key="3"/>
<dbReference type="EMBL" id="Y16632">
    <property type="protein sequence ID" value="CAA76335.1"/>
    <property type="molecule type" value="Genomic_DNA"/>
</dbReference>
<dbReference type="SMR" id="P81200"/>
<dbReference type="GO" id="GO:0000786">
    <property type="term" value="C:nucleosome"/>
    <property type="evidence" value="ECO:0007669"/>
    <property type="project" value="UniProtKB-KW"/>
</dbReference>
<dbReference type="GO" id="GO:0005634">
    <property type="term" value="C:nucleus"/>
    <property type="evidence" value="ECO:0007669"/>
    <property type="project" value="UniProtKB-SubCell"/>
</dbReference>
<dbReference type="GO" id="GO:0003677">
    <property type="term" value="F:DNA binding"/>
    <property type="evidence" value="ECO:0007669"/>
    <property type="project" value="UniProtKB-KW"/>
</dbReference>
<dbReference type="GO" id="GO:0046982">
    <property type="term" value="F:protein heterodimerization activity"/>
    <property type="evidence" value="ECO:0007669"/>
    <property type="project" value="InterPro"/>
</dbReference>
<dbReference type="GO" id="GO:0030527">
    <property type="term" value="F:structural constituent of chromatin"/>
    <property type="evidence" value="ECO:0007669"/>
    <property type="project" value="InterPro"/>
</dbReference>
<dbReference type="CDD" id="cd22911">
    <property type="entry name" value="HFD_H3"/>
    <property type="match status" value="1"/>
</dbReference>
<dbReference type="FunFam" id="1.10.20.10:FF:000001">
    <property type="entry name" value="Histone H3"/>
    <property type="match status" value="1"/>
</dbReference>
<dbReference type="Gene3D" id="1.10.20.10">
    <property type="entry name" value="Histone, subunit A"/>
    <property type="match status" value="1"/>
</dbReference>
<dbReference type="InterPro" id="IPR009072">
    <property type="entry name" value="Histone-fold"/>
</dbReference>
<dbReference type="InterPro" id="IPR007125">
    <property type="entry name" value="Histone_H2A/H2B/H3"/>
</dbReference>
<dbReference type="InterPro" id="IPR000164">
    <property type="entry name" value="Histone_H3/CENP-A"/>
</dbReference>
<dbReference type="PANTHER" id="PTHR11426">
    <property type="entry name" value="HISTONE H3"/>
    <property type="match status" value="1"/>
</dbReference>
<dbReference type="Pfam" id="PF00125">
    <property type="entry name" value="Histone"/>
    <property type="match status" value="1"/>
</dbReference>
<dbReference type="PRINTS" id="PR00622">
    <property type="entry name" value="HISTONEH3"/>
</dbReference>
<dbReference type="SMART" id="SM00428">
    <property type="entry name" value="H3"/>
    <property type="match status" value="1"/>
</dbReference>
<dbReference type="SUPFAM" id="SSF47113">
    <property type="entry name" value="Histone-fold"/>
    <property type="match status" value="1"/>
</dbReference>
<dbReference type="PROSITE" id="PS00322">
    <property type="entry name" value="HISTONE_H3_1"/>
    <property type="match status" value="1"/>
</dbReference>
<dbReference type="PROSITE" id="PS00959">
    <property type="entry name" value="HISTONE_H3_2"/>
    <property type="match status" value="1"/>
</dbReference>
<reference key="1">
    <citation type="journal article" date="1999" name="FEMS Microbiol. Lett.">
        <title>Several highly divergent histone H3 genes are present in the hypotrichous ciliate Stylonychia lemnae.</title>
        <authorList>
            <person name="Bernhard D."/>
        </authorList>
    </citation>
    <scope>NUCLEOTIDE SEQUENCE [GENOMIC DNA]</scope>
</reference>
<accession>P81200</accession>
<comment type="function">
    <text>Core component of nucleosome. Nucleosomes wrap and compact DNA into chromatin, limiting DNA accessibility to the cellular machineries which require DNA as a template. Histones thereby play a central role in transcription regulation, DNA repair, DNA replication and chromosomal stability. DNA accessibility is regulated via a complex set of post-translational modifications of histones, also called histone code, and nucleosome remodeling.</text>
</comment>
<comment type="subunit">
    <text>The nucleosome is a histone octamer containing two molecules each of H2A, H2B, H3 and H4 assembled in one H3-H4 heterotetramer and two H2A-H2B heterodimers. The octamer wraps approximately 147 bp of DNA.</text>
</comment>
<comment type="subcellular location">
    <subcellularLocation>
        <location evidence="1">Nucleus</location>
    </subcellularLocation>
    <subcellularLocation>
        <location evidence="1">Chromosome</location>
    </subcellularLocation>
</comment>
<comment type="similarity">
    <text evidence="3">Belongs to the histone H3 family.</text>
</comment>
<organism>
    <name type="scientific">Stylonychia lemnae</name>
    <name type="common">Ciliate</name>
    <dbReference type="NCBI Taxonomy" id="5949"/>
    <lineage>
        <taxon>Eukaryota</taxon>
        <taxon>Sar</taxon>
        <taxon>Alveolata</taxon>
        <taxon>Ciliophora</taxon>
        <taxon>Intramacronucleata</taxon>
        <taxon>Spirotrichea</taxon>
        <taxon>Stichotrichia</taxon>
        <taxon>Sporadotrichida</taxon>
        <taxon>Oxytrichidae</taxon>
        <taxon>Stylonychinae</taxon>
        <taxon>Stylonychia</taxon>
    </lineage>
</organism>
<name>H36_STYLE</name>
<protein>
    <recommendedName>
        <fullName>Histone H3-6</fullName>
    </recommendedName>
</protein>
<keyword id="KW-0158">Chromosome</keyword>
<keyword id="KW-0238">DNA-binding</keyword>
<keyword id="KW-0544">Nucleosome core</keyword>
<keyword id="KW-0539">Nucleus</keyword>
<gene>
    <name type="primary">H3-6</name>
</gene>
<feature type="chain" id="PRO_0000221326" description="Histone H3-6">
    <location>
        <begin position="1" status="less than"/>
        <end position="114" status="greater than"/>
    </location>
</feature>
<feature type="region of interest" description="Disordered" evidence="2">
    <location>
        <begin position="1"/>
        <end position="32"/>
    </location>
</feature>
<feature type="compositionally biased region" description="Basic residues" evidence="2">
    <location>
        <begin position="1"/>
        <end position="17"/>
    </location>
</feature>
<feature type="compositionally biased region" description="Low complexity" evidence="2">
    <location>
        <begin position="18"/>
        <end position="28"/>
    </location>
</feature>
<feature type="non-terminal residue">
    <location>
        <position position="1"/>
    </location>
</feature>
<feature type="non-terminal residue">
    <location>
        <position position="114"/>
    </location>
</feature>
<sequence>NTGGKAPRKHIAHKQAKKSSAAAATGGVKKPHRFRPGTVALREIRRFQKSTELLIRKLPFQRLVREIAQEYKSDLRFQSQAVLALQEAAEAYMVGLFEDTNLCAIHAKRVTIMP</sequence>
<proteinExistence type="inferred from homology"/>